<protein>
    <recommendedName>
        <fullName>Uncharacterized protein y4kS</fullName>
    </recommendedName>
</protein>
<proteinExistence type="predicted"/>
<sequence length="301" mass="33239">MIPTERGLQQVLEWGRSLTGFADEHAAEAVRGGQYILQRIHPSLRDTSARTGRDPQDETLIVAFYRELALLFWLDDCNDLDLIAPEQLAAVEQALGQGVPCALPGFEGCAVLRASLAALAYDRRDYAQLLDDTRCYCAALRAGHAQAAGAAERWSYAEYLHNGIDSIAYANVFCCLSLLWGLDMATLRARPAFRQVLRLISAIGRLQNDLHGRDKDRSAGEADNAAILLLERYPAMPVVEFLNDELAGHTRMLHRVMAEERFPAPWGPLIEAMAAIRAHYYQTSTSRYRSDAAGGGQHAPA</sequence>
<feature type="chain" id="PRO_0000200898" description="Uncharacterized protein y4kS">
    <location>
        <begin position="1"/>
        <end position="301"/>
    </location>
</feature>
<gene>
    <name type="ordered locus">NGR_a02770</name>
    <name type="ORF">y4kS</name>
</gene>
<geneLocation type="plasmid">
    <name>sym pNGR234a</name>
</geneLocation>
<dbReference type="EMBL" id="U00090">
    <property type="protein sequence ID" value="AAB91750.1"/>
    <property type="molecule type" value="Genomic_DNA"/>
</dbReference>
<dbReference type="PIR" id="T10873">
    <property type="entry name" value="T10873"/>
</dbReference>
<dbReference type="RefSeq" id="NP_443948.1">
    <property type="nucleotide sequence ID" value="NC_000914.2"/>
</dbReference>
<dbReference type="RefSeq" id="WP_010875302.1">
    <property type="nucleotide sequence ID" value="NC_000914.2"/>
</dbReference>
<dbReference type="SMR" id="P55537"/>
<dbReference type="KEGG" id="rhi:NGR_a02770"/>
<dbReference type="PATRIC" id="fig|394.7.peg.295"/>
<dbReference type="eggNOG" id="ENOG502Z7Z2">
    <property type="taxonomic scope" value="Bacteria"/>
</dbReference>
<dbReference type="HOGENOM" id="CLU_936486_0_0_5"/>
<dbReference type="OrthoDB" id="8195780at2"/>
<dbReference type="Proteomes" id="UP000001054">
    <property type="component" value="Plasmid pNGR234a"/>
</dbReference>
<dbReference type="Gene3D" id="1.10.600.10">
    <property type="entry name" value="Farnesyl Diphosphate Synthase"/>
    <property type="match status" value="1"/>
</dbReference>
<dbReference type="InterPro" id="IPR008949">
    <property type="entry name" value="Isoprenoid_synthase_dom_sf"/>
</dbReference>
<dbReference type="Pfam" id="PF19086">
    <property type="entry name" value="Terpene_syn_C_2"/>
    <property type="match status" value="1"/>
</dbReference>
<dbReference type="SUPFAM" id="SSF48576">
    <property type="entry name" value="Terpenoid synthases"/>
    <property type="match status" value="1"/>
</dbReference>
<name>Y4KS_SINFN</name>
<reference key="1">
    <citation type="journal article" date="1997" name="Nature">
        <title>Molecular basis of symbiosis between Rhizobium and legumes.</title>
        <authorList>
            <person name="Freiberg C.A."/>
            <person name="Fellay R."/>
            <person name="Bairoch A."/>
            <person name="Broughton W.J."/>
            <person name="Rosenthal A."/>
            <person name="Perret X."/>
        </authorList>
    </citation>
    <scope>NUCLEOTIDE SEQUENCE [LARGE SCALE GENOMIC DNA]</scope>
    <source>
        <strain>NBRC 101917 / NGR234</strain>
    </source>
</reference>
<reference key="2">
    <citation type="journal article" date="2009" name="Appl. Environ. Microbiol.">
        <title>Rhizobium sp. strain NGR234 possesses a remarkable number of secretion systems.</title>
        <authorList>
            <person name="Schmeisser C."/>
            <person name="Liesegang H."/>
            <person name="Krysciak D."/>
            <person name="Bakkou N."/>
            <person name="Le Quere A."/>
            <person name="Wollherr A."/>
            <person name="Heinemeyer I."/>
            <person name="Morgenstern B."/>
            <person name="Pommerening-Roeser A."/>
            <person name="Flores M."/>
            <person name="Palacios R."/>
            <person name="Brenner S."/>
            <person name="Gottschalk G."/>
            <person name="Schmitz R.A."/>
            <person name="Broughton W.J."/>
            <person name="Perret X."/>
            <person name="Strittmatter A.W."/>
            <person name="Streit W.R."/>
        </authorList>
    </citation>
    <scope>NUCLEOTIDE SEQUENCE [LARGE SCALE GENOMIC DNA]</scope>
    <source>
        <strain>NBRC 101917 / NGR234</strain>
    </source>
</reference>
<organism>
    <name type="scientific">Sinorhizobium fredii (strain NBRC 101917 / NGR234)</name>
    <dbReference type="NCBI Taxonomy" id="394"/>
    <lineage>
        <taxon>Bacteria</taxon>
        <taxon>Pseudomonadati</taxon>
        <taxon>Pseudomonadota</taxon>
        <taxon>Alphaproteobacteria</taxon>
        <taxon>Hyphomicrobiales</taxon>
        <taxon>Rhizobiaceae</taxon>
        <taxon>Sinorhizobium/Ensifer group</taxon>
        <taxon>Sinorhizobium</taxon>
    </lineage>
</organism>
<keyword id="KW-0614">Plasmid</keyword>
<keyword id="KW-1185">Reference proteome</keyword>
<accession>P55537</accession>